<protein>
    <recommendedName>
        <fullName evidence="1">Glutamyl-tRNA(Gln) amidotransferase subunit A</fullName>
        <shortName evidence="1">Glu-ADT subunit A</shortName>
        <ecNumber evidence="1">6.3.5.7</ecNumber>
    </recommendedName>
</protein>
<reference key="1">
    <citation type="submission" date="2005-08" db="EMBL/GenBank/DDBJ databases">
        <title>Complete sequence of Chlorobium chlorochromatii CaD3.</title>
        <authorList>
            <consortium name="US DOE Joint Genome Institute"/>
            <person name="Copeland A."/>
            <person name="Lucas S."/>
            <person name="Lapidus A."/>
            <person name="Barry K."/>
            <person name="Detter J.C."/>
            <person name="Glavina T."/>
            <person name="Hammon N."/>
            <person name="Israni S."/>
            <person name="Pitluck S."/>
            <person name="Bryant D."/>
            <person name="Schmutz J."/>
            <person name="Larimer F."/>
            <person name="Land M."/>
            <person name="Kyrpides N."/>
            <person name="Ivanova N."/>
            <person name="Richardson P."/>
        </authorList>
    </citation>
    <scope>NUCLEOTIDE SEQUENCE [LARGE SCALE GENOMIC DNA]</scope>
    <source>
        <strain>CaD3</strain>
    </source>
</reference>
<accession>Q3ATD7</accession>
<feature type="chain" id="PRO_0000241087" description="Glutamyl-tRNA(Gln) amidotransferase subunit A">
    <location>
        <begin position="1"/>
        <end position="474"/>
    </location>
</feature>
<feature type="active site" description="Charge relay system" evidence="1">
    <location>
        <position position="76"/>
    </location>
</feature>
<feature type="active site" description="Charge relay system" evidence="1">
    <location>
        <position position="151"/>
    </location>
</feature>
<feature type="active site" description="Acyl-ester intermediate" evidence="1">
    <location>
        <position position="175"/>
    </location>
</feature>
<gene>
    <name evidence="1" type="primary">gatA</name>
    <name type="ordered locus">Cag_0465</name>
</gene>
<sequence length="474" mass="51467">MQLSSYTELREQLLAGSLRCEEVVRSYLERIDAAREDNIFITVFHERALERARMLDRKLAEGGTVGKLFGLPMAIKDNIAMKGERLTCASKILENYESVFDATVILRLEAEDAIFLGKTNMDEFAMGSSNENSAFGNVPNPFDKSRVPGGSSGGSAAAVAANLALVALGSDTGGSVRQPAGFCDIVGLKPTYGRISRFGLVAFASSFDQIGVLARTCGDAALVLEVMAGKDERDATSSAHQVDSYHSMMERVSPEGLKIGVPQEFFTDALNADVARLVLATLDDLRNRGAELVDITLPDSAYAIAAYYILVTAEASSNLARFDGARYGFRTSEAADLAAMYVNSRTEGFGREVKRRIMLGTYVLSAGYYDTYYKKAQQVRRYFQDQYRAALQHVDVIAGPTSPFPPFGLGDKTGDPLEMYLADVFTVPASIVGMPAVSVPLGFDSQKLPVGMHLVGNFFEEGKLLGIARMMQRA</sequence>
<name>GATA_CHLCH</name>
<keyword id="KW-0067">ATP-binding</keyword>
<keyword id="KW-0436">Ligase</keyword>
<keyword id="KW-0547">Nucleotide-binding</keyword>
<keyword id="KW-0648">Protein biosynthesis</keyword>
<comment type="function">
    <text evidence="1">Allows the formation of correctly charged Gln-tRNA(Gln) through the transamidation of misacylated Glu-tRNA(Gln) in organisms which lack glutaminyl-tRNA synthetase. The reaction takes place in the presence of glutamine and ATP through an activated gamma-phospho-Glu-tRNA(Gln).</text>
</comment>
<comment type="catalytic activity">
    <reaction evidence="1">
        <text>L-glutamyl-tRNA(Gln) + L-glutamine + ATP + H2O = L-glutaminyl-tRNA(Gln) + L-glutamate + ADP + phosphate + H(+)</text>
        <dbReference type="Rhea" id="RHEA:17521"/>
        <dbReference type="Rhea" id="RHEA-COMP:9681"/>
        <dbReference type="Rhea" id="RHEA-COMP:9684"/>
        <dbReference type="ChEBI" id="CHEBI:15377"/>
        <dbReference type="ChEBI" id="CHEBI:15378"/>
        <dbReference type="ChEBI" id="CHEBI:29985"/>
        <dbReference type="ChEBI" id="CHEBI:30616"/>
        <dbReference type="ChEBI" id="CHEBI:43474"/>
        <dbReference type="ChEBI" id="CHEBI:58359"/>
        <dbReference type="ChEBI" id="CHEBI:78520"/>
        <dbReference type="ChEBI" id="CHEBI:78521"/>
        <dbReference type="ChEBI" id="CHEBI:456216"/>
        <dbReference type="EC" id="6.3.5.7"/>
    </reaction>
</comment>
<comment type="subunit">
    <text evidence="1">Heterotrimer of A, B and C subunits.</text>
</comment>
<comment type="similarity">
    <text evidence="1">Belongs to the amidase family. GatA subfamily.</text>
</comment>
<dbReference type="EC" id="6.3.5.7" evidence="1"/>
<dbReference type="EMBL" id="CP000108">
    <property type="protein sequence ID" value="ABB27738.1"/>
    <property type="molecule type" value="Genomic_DNA"/>
</dbReference>
<dbReference type="SMR" id="Q3ATD7"/>
<dbReference type="STRING" id="340177.Cag_0465"/>
<dbReference type="KEGG" id="cch:Cag_0465"/>
<dbReference type="eggNOG" id="COG0154">
    <property type="taxonomic scope" value="Bacteria"/>
</dbReference>
<dbReference type="HOGENOM" id="CLU_009600_0_3_10"/>
<dbReference type="OrthoDB" id="9811471at2"/>
<dbReference type="GO" id="GO:0030956">
    <property type="term" value="C:glutamyl-tRNA(Gln) amidotransferase complex"/>
    <property type="evidence" value="ECO:0007669"/>
    <property type="project" value="InterPro"/>
</dbReference>
<dbReference type="GO" id="GO:0005524">
    <property type="term" value="F:ATP binding"/>
    <property type="evidence" value="ECO:0007669"/>
    <property type="project" value="UniProtKB-KW"/>
</dbReference>
<dbReference type="GO" id="GO:0050567">
    <property type="term" value="F:glutaminyl-tRNA synthase (glutamine-hydrolyzing) activity"/>
    <property type="evidence" value="ECO:0007669"/>
    <property type="project" value="UniProtKB-UniRule"/>
</dbReference>
<dbReference type="GO" id="GO:0006412">
    <property type="term" value="P:translation"/>
    <property type="evidence" value="ECO:0007669"/>
    <property type="project" value="UniProtKB-UniRule"/>
</dbReference>
<dbReference type="Gene3D" id="3.90.1300.10">
    <property type="entry name" value="Amidase signature (AS) domain"/>
    <property type="match status" value="1"/>
</dbReference>
<dbReference type="HAMAP" id="MF_00120">
    <property type="entry name" value="GatA"/>
    <property type="match status" value="1"/>
</dbReference>
<dbReference type="InterPro" id="IPR000120">
    <property type="entry name" value="Amidase"/>
</dbReference>
<dbReference type="InterPro" id="IPR020556">
    <property type="entry name" value="Amidase_CS"/>
</dbReference>
<dbReference type="InterPro" id="IPR023631">
    <property type="entry name" value="Amidase_dom"/>
</dbReference>
<dbReference type="InterPro" id="IPR036928">
    <property type="entry name" value="AS_sf"/>
</dbReference>
<dbReference type="InterPro" id="IPR004412">
    <property type="entry name" value="GatA"/>
</dbReference>
<dbReference type="NCBIfam" id="TIGR00132">
    <property type="entry name" value="gatA"/>
    <property type="match status" value="1"/>
</dbReference>
<dbReference type="PANTHER" id="PTHR11895:SF151">
    <property type="entry name" value="GLUTAMYL-TRNA(GLN) AMIDOTRANSFERASE SUBUNIT A"/>
    <property type="match status" value="1"/>
</dbReference>
<dbReference type="PANTHER" id="PTHR11895">
    <property type="entry name" value="TRANSAMIDASE"/>
    <property type="match status" value="1"/>
</dbReference>
<dbReference type="Pfam" id="PF01425">
    <property type="entry name" value="Amidase"/>
    <property type="match status" value="1"/>
</dbReference>
<dbReference type="SUPFAM" id="SSF75304">
    <property type="entry name" value="Amidase signature (AS) enzymes"/>
    <property type="match status" value="1"/>
</dbReference>
<dbReference type="PROSITE" id="PS00571">
    <property type="entry name" value="AMIDASES"/>
    <property type="match status" value="1"/>
</dbReference>
<proteinExistence type="inferred from homology"/>
<evidence type="ECO:0000255" key="1">
    <source>
        <dbReference type="HAMAP-Rule" id="MF_00120"/>
    </source>
</evidence>
<organism>
    <name type="scientific">Chlorobium chlorochromatii (strain CaD3)</name>
    <dbReference type="NCBI Taxonomy" id="340177"/>
    <lineage>
        <taxon>Bacteria</taxon>
        <taxon>Pseudomonadati</taxon>
        <taxon>Chlorobiota</taxon>
        <taxon>Chlorobiia</taxon>
        <taxon>Chlorobiales</taxon>
        <taxon>Chlorobiaceae</taxon>
        <taxon>Chlorobium/Pelodictyon group</taxon>
        <taxon>Chlorobium</taxon>
    </lineage>
</organism>